<comment type="function">
    <text evidence="1">Forms part of the ribosomal stalk which helps the ribosome interact with GTP-bound translation factors. Is thus essential for accurate translation.</text>
</comment>
<comment type="subunit">
    <text evidence="1">Homodimer. Part of the ribosomal stalk of the 50S ribosomal subunit. Forms a multimeric L10(L12)X complex, where L10 forms an elongated spine to which 2 to 4 L12 dimers bind in a sequential fashion. Binds GTP-bound translation factors.</text>
</comment>
<comment type="similarity">
    <text evidence="1">Belongs to the bacterial ribosomal protein bL12 family.</text>
</comment>
<name>RL7_GEODF</name>
<reference key="1">
    <citation type="submission" date="2009-01" db="EMBL/GenBank/DDBJ databases">
        <title>Complete sequence of Geobacter sp. FRC-32.</title>
        <authorList>
            <consortium name="US DOE Joint Genome Institute"/>
            <person name="Lucas S."/>
            <person name="Copeland A."/>
            <person name="Lapidus A."/>
            <person name="Glavina del Rio T."/>
            <person name="Dalin E."/>
            <person name="Tice H."/>
            <person name="Bruce D."/>
            <person name="Goodwin L."/>
            <person name="Pitluck S."/>
            <person name="Saunders E."/>
            <person name="Brettin T."/>
            <person name="Detter J.C."/>
            <person name="Han C."/>
            <person name="Larimer F."/>
            <person name="Land M."/>
            <person name="Hauser L."/>
            <person name="Kyrpides N."/>
            <person name="Ovchinnikova G."/>
            <person name="Kostka J."/>
            <person name="Richardson P."/>
        </authorList>
    </citation>
    <scope>NUCLEOTIDE SEQUENCE [LARGE SCALE GENOMIC DNA]</scope>
    <source>
        <strain>DSM 22248 / JCM 15807 / FRC-32</strain>
    </source>
</reference>
<organism>
    <name type="scientific">Geotalea daltonii (strain DSM 22248 / JCM 15807 / FRC-32)</name>
    <name type="common">Geobacter daltonii</name>
    <dbReference type="NCBI Taxonomy" id="316067"/>
    <lineage>
        <taxon>Bacteria</taxon>
        <taxon>Pseudomonadati</taxon>
        <taxon>Thermodesulfobacteriota</taxon>
        <taxon>Desulfuromonadia</taxon>
        <taxon>Geobacterales</taxon>
        <taxon>Geobacteraceae</taxon>
        <taxon>Geotalea</taxon>
    </lineage>
</organism>
<gene>
    <name evidence="1" type="primary">rplL</name>
    <name type="ordered locus">Geob_3633</name>
</gene>
<sequence>MAEITKADVISFIEKMSVLELAEMVKELEEKFGVSAAAPVAVAAVAGPAAAEAAEEKTEFDVILKAAGANKIGVIKVVRALTSLGLKEAKDLVDGAPQPLKTGVSKEEAEEAKKQLVEAGAEVEIK</sequence>
<keyword id="KW-1185">Reference proteome</keyword>
<keyword id="KW-0687">Ribonucleoprotein</keyword>
<keyword id="KW-0689">Ribosomal protein</keyword>
<evidence type="ECO:0000255" key="1">
    <source>
        <dbReference type="HAMAP-Rule" id="MF_00368"/>
    </source>
</evidence>
<evidence type="ECO:0000305" key="2"/>
<proteinExistence type="inferred from homology"/>
<protein>
    <recommendedName>
        <fullName evidence="1">Large ribosomal subunit protein bL12</fullName>
    </recommendedName>
    <alternativeName>
        <fullName evidence="2">50S ribosomal protein L7/L12</fullName>
    </alternativeName>
</protein>
<feature type="chain" id="PRO_1000195797" description="Large ribosomal subunit protein bL12">
    <location>
        <begin position="1"/>
        <end position="126"/>
    </location>
</feature>
<dbReference type="EMBL" id="CP001390">
    <property type="protein sequence ID" value="ACM21974.1"/>
    <property type="molecule type" value="Genomic_DNA"/>
</dbReference>
<dbReference type="RefSeq" id="WP_012648701.1">
    <property type="nucleotide sequence ID" value="NC_011979.1"/>
</dbReference>
<dbReference type="SMR" id="B9M6V3"/>
<dbReference type="STRING" id="316067.Geob_3633"/>
<dbReference type="KEGG" id="geo:Geob_3633"/>
<dbReference type="eggNOG" id="COG0222">
    <property type="taxonomic scope" value="Bacteria"/>
</dbReference>
<dbReference type="HOGENOM" id="CLU_086499_3_0_7"/>
<dbReference type="OrthoDB" id="9811748at2"/>
<dbReference type="Proteomes" id="UP000007721">
    <property type="component" value="Chromosome"/>
</dbReference>
<dbReference type="GO" id="GO:0022625">
    <property type="term" value="C:cytosolic large ribosomal subunit"/>
    <property type="evidence" value="ECO:0007669"/>
    <property type="project" value="TreeGrafter"/>
</dbReference>
<dbReference type="GO" id="GO:0003729">
    <property type="term" value="F:mRNA binding"/>
    <property type="evidence" value="ECO:0007669"/>
    <property type="project" value="TreeGrafter"/>
</dbReference>
<dbReference type="GO" id="GO:0003735">
    <property type="term" value="F:structural constituent of ribosome"/>
    <property type="evidence" value="ECO:0007669"/>
    <property type="project" value="InterPro"/>
</dbReference>
<dbReference type="GO" id="GO:0006412">
    <property type="term" value="P:translation"/>
    <property type="evidence" value="ECO:0007669"/>
    <property type="project" value="UniProtKB-UniRule"/>
</dbReference>
<dbReference type="CDD" id="cd00387">
    <property type="entry name" value="Ribosomal_L7_L12"/>
    <property type="match status" value="1"/>
</dbReference>
<dbReference type="FunFam" id="3.30.1390.10:FF:000001">
    <property type="entry name" value="50S ribosomal protein L7/L12"/>
    <property type="match status" value="1"/>
</dbReference>
<dbReference type="Gene3D" id="3.30.1390.10">
    <property type="match status" value="1"/>
</dbReference>
<dbReference type="Gene3D" id="1.20.5.710">
    <property type="entry name" value="Single helix bin"/>
    <property type="match status" value="1"/>
</dbReference>
<dbReference type="HAMAP" id="MF_00368">
    <property type="entry name" value="Ribosomal_bL12"/>
    <property type="match status" value="1"/>
</dbReference>
<dbReference type="InterPro" id="IPR000206">
    <property type="entry name" value="Ribosomal_bL12"/>
</dbReference>
<dbReference type="InterPro" id="IPR013823">
    <property type="entry name" value="Ribosomal_bL12_C"/>
</dbReference>
<dbReference type="InterPro" id="IPR014719">
    <property type="entry name" value="Ribosomal_bL12_C/ClpS-like"/>
</dbReference>
<dbReference type="InterPro" id="IPR008932">
    <property type="entry name" value="Ribosomal_bL12_oligo"/>
</dbReference>
<dbReference type="InterPro" id="IPR036235">
    <property type="entry name" value="Ribosomal_bL12_oligo_N_sf"/>
</dbReference>
<dbReference type="NCBIfam" id="TIGR00855">
    <property type="entry name" value="L12"/>
    <property type="match status" value="1"/>
</dbReference>
<dbReference type="PANTHER" id="PTHR45987">
    <property type="entry name" value="39S RIBOSOMAL PROTEIN L12"/>
    <property type="match status" value="1"/>
</dbReference>
<dbReference type="PANTHER" id="PTHR45987:SF4">
    <property type="entry name" value="LARGE RIBOSOMAL SUBUNIT PROTEIN BL12M"/>
    <property type="match status" value="1"/>
</dbReference>
<dbReference type="Pfam" id="PF00542">
    <property type="entry name" value="Ribosomal_L12"/>
    <property type="match status" value="1"/>
</dbReference>
<dbReference type="Pfam" id="PF16320">
    <property type="entry name" value="Ribosomal_L12_N"/>
    <property type="match status" value="1"/>
</dbReference>
<dbReference type="SUPFAM" id="SSF54736">
    <property type="entry name" value="ClpS-like"/>
    <property type="match status" value="1"/>
</dbReference>
<dbReference type="SUPFAM" id="SSF48300">
    <property type="entry name" value="Ribosomal protein L7/12, oligomerisation (N-terminal) domain"/>
    <property type="match status" value="1"/>
</dbReference>
<accession>B9M6V3</accession>